<proteinExistence type="evidence at transcript level"/>
<organism>
    <name type="scientific">Danio rerio</name>
    <name type="common">Zebrafish</name>
    <name type="synonym">Brachydanio rerio</name>
    <dbReference type="NCBI Taxonomy" id="7955"/>
    <lineage>
        <taxon>Eukaryota</taxon>
        <taxon>Metazoa</taxon>
        <taxon>Chordata</taxon>
        <taxon>Craniata</taxon>
        <taxon>Vertebrata</taxon>
        <taxon>Euteleostomi</taxon>
        <taxon>Actinopterygii</taxon>
        <taxon>Neopterygii</taxon>
        <taxon>Teleostei</taxon>
        <taxon>Ostariophysi</taxon>
        <taxon>Cypriniformes</taxon>
        <taxon>Danionidae</taxon>
        <taxon>Danioninae</taxon>
        <taxon>Danio</taxon>
    </lineage>
</organism>
<reference key="1">
    <citation type="journal article" date="2013" name="Nature">
        <title>The zebrafish reference genome sequence and its relationship to the human genome.</title>
        <authorList>
            <person name="Howe K."/>
            <person name="Clark M.D."/>
            <person name="Torroja C.F."/>
            <person name="Torrance J."/>
            <person name="Berthelot C."/>
            <person name="Muffato M."/>
            <person name="Collins J.E."/>
            <person name="Humphray S."/>
            <person name="McLaren K."/>
            <person name="Matthews L."/>
            <person name="McLaren S."/>
            <person name="Sealy I."/>
            <person name="Caccamo M."/>
            <person name="Churcher C."/>
            <person name="Scott C."/>
            <person name="Barrett J.C."/>
            <person name="Koch R."/>
            <person name="Rauch G.J."/>
            <person name="White S."/>
            <person name="Chow W."/>
            <person name="Kilian B."/>
            <person name="Quintais L.T."/>
            <person name="Guerra-Assuncao J.A."/>
            <person name="Zhou Y."/>
            <person name="Gu Y."/>
            <person name="Yen J."/>
            <person name="Vogel J.H."/>
            <person name="Eyre T."/>
            <person name="Redmond S."/>
            <person name="Banerjee R."/>
            <person name="Chi J."/>
            <person name="Fu B."/>
            <person name="Langley E."/>
            <person name="Maguire S.F."/>
            <person name="Laird G.K."/>
            <person name="Lloyd D."/>
            <person name="Kenyon E."/>
            <person name="Donaldson S."/>
            <person name="Sehra H."/>
            <person name="Almeida-King J."/>
            <person name="Loveland J."/>
            <person name="Trevanion S."/>
            <person name="Jones M."/>
            <person name="Quail M."/>
            <person name="Willey D."/>
            <person name="Hunt A."/>
            <person name="Burton J."/>
            <person name="Sims S."/>
            <person name="McLay K."/>
            <person name="Plumb B."/>
            <person name="Davis J."/>
            <person name="Clee C."/>
            <person name="Oliver K."/>
            <person name="Clark R."/>
            <person name="Riddle C."/>
            <person name="Elliot D."/>
            <person name="Threadgold G."/>
            <person name="Harden G."/>
            <person name="Ware D."/>
            <person name="Begum S."/>
            <person name="Mortimore B."/>
            <person name="Kerry G."/>
            <person name="Heath P."/>
            <person name="Phillimore B."/>
            <person name="Tracey A."/>
            <person name="Corby N."/>
            <person name="Dunn M."/>
            <person name="Johnson C."/>
            <person name="Wood J."/>
            <person name="Clark S."/>
            <person name="Pelan S."/>
            <person name="Griffiths G."/>
            <person name="Smith M."/>
            <person name="Glithero R."/>
            <person name="Howden P."/>
            <person name="Barker N."/>
            <person name="Lloyd C."/>
            <person name="Stevens C."/>
            <person name="Harley J."/>
            <person name="Holt K."/>
            <person name="Panagiotidis G."/>
            <person name="Lovell J."/>
            <person name="Beasley H."/>
            <person name="Henderson C."/>
            <person name="Gordon D."/>
            <person name="Auger K."/>
            <person name="Wright D."/>
            <person name="Collins J."/>
            <person name="Raisen C."/>
            <person name="Dyer L."/>
            <person name="Leung K."/>
            <person name="Robertson L."/>
            <person name="Ambridge K."/>
            <person name="Leongamornlert D."/>
            <person name="McGuire S."/>
            <person name="Gilderthorp R."/>
            <person name="Griffiths C."/>
            <person name="Manthravadi D."/>
            <person name="Nichol S."/>
            <person name="Barker G."/>
            <person name="Whitehead S."/>
            <person name="Kay M."/>
            <person name="Brown J."/>
            <person name="Murnane C."/>
            <person name="Gray E."/>
            <person name="Humphries M."/>
            <person name="Sycamore N."/>
            <person name="Barker D."/>
            <person name="Saunders D."/>
            <person name="Wallis J."/>
            <person name="Babbage A."/>
            <person name="Hammond S."/>
            <person name="Mashreghi-Mohammadi M."/>
            <person name="Barr L."/>
            <person name="Martin S."/>
            <person name="Wray P."/>
            <person name="Ellington A."/>
            <person name="Matthews N."/>
            <person name="Ellwood M."/>
            <person name="Woodmansey R."/>
            <person name="Clark G."/>
            <person name="Cooper J."/>
            <person name="Tromans A."/>
            <person name="Grafham D."/>
            <person name="Skuce C."/>
            <person name="Pandian R."/>
            <person name="Andrews R."/>
            <person name="Harrison E."/>
            <person name="Kimberley A."/>
            <person name="Garnett J."/>
            <person name="Fosker N."/>
            <person name="Hall R."/>
            <person name="Garner P."/>
            <person name="Kelly D."/>
            <person name="Bird C."/>
            <person name="Palmer S."/>
            <person name="Gehring I."/>
            <person name="Berger A."/>
            <person name="Dooley C.M."/>
            <person name="Ersan-Urun Z."/>
            <person name="Eser C."/>
            <person name="Geiger H."/>
            <person name="Geisler M."/>
            <person name="Karotki L."/>
            <person name="Kirn A."/>
            <person name="Konantz J."/>
            <person name="Konantz M."/>
            <person name="Oberlander M."/>
            <person name="Rudolph-Geiger S."/>
            <person name="Teucke M."/>
            <person name="Lanz C."/>
            <person name="Raddatz G."/>
            <person name="Osoegawa K."/>
            <person name="Zhu B."/>
            <person name="Rapp A."/>
            <person name="Widaa S."/>
            <person name="Langford C."/>
            <person name="Yang F."/>
            <person name="Schuster S.C."/>
            <person name="Carter N.P."/>
            <person name="Harrow J."/>
            <person name="Ning Z."/>
            <person name="Herrero J."/>
            <person name="Searle S.M."/>
            <person name="Enright A."/>
            <person name="Geisler R."/>
            <person name="Plasterk R.H."/>
            <person name="Lee C."/>
            <person name="Westerfield M."/>
            <person name="de Jong P.J."/>
            <person name="Zon L.I."/>
            <person name="Postlethwait J.H."/>
            <person name="Nusslein-Volhard C."/>
            <person name="Hubbard T.J."/>
            <person name="Roest Crollius H."/>
            <person name="Rogers J."/>
            <person name="Stemple D.L."/>
        </authorList>
    </citation>
    <scope>NUCLEOTIDE SEQUENCE [LARGE SCALE GENOMIC DNA]</scope>
    <source>
        <strain>Tuebingen</strain>
    </source>
</reference>
<reference key="2">
    <citation type="submission" date="2004-07" db="EMBL/GenBank/DDBJ databases">
        <authorList>
            <consortium name="NIH - Zebrafish Gene Collection (ZGC) project"/>
        </authorList>
    </citation>
    <scope>NUCLEOTIDE SEQUENCE [LARGE SCALE MRNA]</scope>
</reference>
<comment type="subcellular location">
    <subcellularLocation>
        <location evidence="3">Membrane</location>
        <topology evidence="3">Multi-pass membrane protein</topology>
    </subcellularLocation>
</comment>
<comment type="similarity">
    <text evidence="3">Belongs to the TM2 family.</text>
</comment>
<protein>
    <recommendedName>
        <fullName>TM2 domain-containing protein 2</fullName>
    </recommendedName>
</protein>
<evidence type="ECO:0000255" key="1"/>
<evidence type="ECO:0000255" key="2">
    <source>
        <dbReference type="PROSITE-ProRule" id="PRU00498"/>
    </source>
</evidence>
<evidence type="ECO:0000305" key="3"/>
<feature type="signal peptide" evidence="1">
    <location>
        <begin position="1"/>
        <end position="32"/>
    </location>
</feature>
<feature type="chain" id="PRO_0000298986" description="TM2 domain-containing protein 2">
    <location>
        <begin position="33"/>
        <end position="229"/>
    </location>
</feature>
<feature type="topological domain" description="Extracellular" evidence="3">
    <location>
        <begin position="33"/>
        <end position="159"/>
    </location>
</feature>
<feature type="transmembrane region" description="Helical" evidence="1">
    <location>
        <begin position="160"/>
        <end position="180"/>
    </location>
</feature>
<feature type="topological domain" description="Cytoplasmic" evidence="3">
    <location>
        <begin position="181"/>
        <end position="194"/>
    </location>
</feature>
<feature type="transmembrane region" description="Helical" evidence="1">
    <location>
        <begin position="195"/>
        <end position="215"/>
    </location>
</feature>
<feature type="topological domain" description="Extracellular" evidence="3">
    <location>
        <begin position="216"/>
        <end position="229"/>
    </location>
</feature>
<feature type="domain" description="TM2" evidence="1">
    <location>
        <begin position="162"/>
        <end position="210"/>
    </location>
</feature>
<feature type="glycosylation site" description="N-linked (GlcNAc...) asparagine" evidence="2">
    <location>
        <position position="34"/>
    </location>
</feature>
<feature type="glycosylation site" description="N-linked (GlcNAc...) asparagine" evidence="2">
    <location>
        <position position="58"/>
    </location>
</feature>
<feature type="glycosylation site" description="N-linked (GlcNAc...) asparagine" evidence="2">
    <location>
        <position position="72"/>
    </location>
</feature>
<feature type="glycosylation site" description="N-linked (GlcNAc...) asparagine" evidence="2">
    <location>
        <position position="107"/>
    </location>
</feature>
<feature type="glycosylation site" description="N-linked (GlcNAc...) asparagine" evidence="2">
    <location>
        <position position="130"/>
    </location>
</feature>
<keyword id="KW-0325">Glycoprotein</keyword>
<keyword id="KW-0472">Membrane</keyword>
<keyword id="KW-1185">Reference proteome</keyword>
<keyword id="KW-0732">Signal</keyword>
<keyword id="KW-0812">Transmembrane</keyword>
<keyword id="KW-1133">Transmembrane helix</keyword>
<dbReference type="EMBL" id="BX927282">
    <property type="status" value="NOT_ANNOTATED_CDS"/>
    <property type="molecule type" value="Genomic_DNA"/>
</dbReference>
<dbReference type="EMBL" id="BC075934">
    <property type="protein sequence ID" value="AAH75934.1"/>
    <property type="molecule type" value="mRNA"/>
</dbReference>
<dbReference type="RefSeq" id="NP_001002640.1">
    <property type="nucleotide sequence ID" value="NM_001002640.1"/>
</dbReference>
<dbReference type="FunCoup" id="Q6DHN3">
    <property type="interactions" value="1186"/>
</dbReference>
<dbReference type="STRING" id="7955.ENSDARP00000051482"/>
<dbReference type="GlyCosmos" id="Q6DHN3">
    <property type="glycosylation" value="5 sites, No reported glycans"/>
</dbReference>
<dbReference type="PaxDb" id="7955-ENSDARP00000051482"/>
<dbReference type="Ensembl" id="ENSDART00000051483">
    <property type="protein sequence ID" value="ENSDARP00000051482"/>
    <property type="gene ID" value="ENSDARG00000035515"/>
</dbReference>
<dbReference type="GeneID" id="436913"/>
<dbReference type="KEGG" id="dre:436913"/>
<dbReference type="AGR" id="ZFIN:ZDB-GENE-040718-387"/>
<dbReference type="CTD" id="83877"/>
<dbReference type="ZFIN" id="ZDB-GENE-040718-387">
    <property type="gene designation" value="tm2d2"/>
</dbReference>
<dbReference type="eggNOG" id="KOG4272">
    <property type="taxonomic scope" value="Eukaryota"/>
</dbReference>
<dbReference type="InParanoid" id="Q6DHN3"/>
<dbReference type="OMA" id="PIDHKGN"/>
<dbReference type="OrthoDB" id="408511at2759"/>
<dbReference type="PhylomeDB" id="Q6DHN3"/>
<dbReference type="TreeFam" id="TF314896"/>
<dbReference type="PRO" id="PR:Q6DHN3"/>
<dbReference type="Proteomes" id="UP000000437">
    <property type="component" value="Chromosome 5"/>
</dbReference>
<dbReference type="Bgee" id="ENSDARG00000035515">
    <property type="expression patterns" value="Expressed in ovary and 23 other cell types or tissues"/>
</dbReference>
<dbReference type="ExpressionAtlas" id="Q6DHN3">
    <property type="expression patterns" value="baseline"/>
</dbReference>
<dbReference type="GO" id="GO:0016020">
    <property type="term" value="C:membrane"/>
    <property type="evidence" value="ECO:0007669"/>
    <property type="project" value="UniProtKB-SubCell"/>
</dbReference>
<dbReference type="InterPro" id="IPR007829">
    <property type="entry name" value="TM2"/>
</dbReference>
<dbReference type="InterPro" id="IPR050932">
    <property type="entry name" value="TM2D1-3-like"/>
</dbReference>
<dbReference type="PANTHER" id="PTHR21016">
    <property type="entry name" value="BETA-AMYLOID BINDING PROTEIN-RELATED"/>
    <property type="match status" value="1"/>
</dbReference>
<dbReference type="PANTHER" id="PTHR21016:SF4">
    <property type="entry name" value="TM2 DOMAIN-CONTAINING PROTEIN 2"/>
    <property type="match status" value="1"/>
</dbReference>
<dbReference type="Pfam" id="PF05154">
    <property type="entry name" value="TM2"/>
    <property type="match status" value="1"/>
</dbReference>
<gene>
    <name type="primary">tm2d2</name>
    <name type="ORF">si:dkey-49o11.3</name>
    <name type="ORF">zgc:92201</name>
</gene>
<accession>Q6DHN3</accession>
<sequence>MPQISVNYILLCGQFLLFFTVLLLQCLEGIHSQNSTEPPGNRVTTSKPVLFSEQPEENVTESGSVIPTETSNHTEQYEYNPPSPVVLCRYLPEEFIFCQDPVDHGGNVSAFQELGYGCVKFGGQVYKDVNHTQVLCTALDGIECAGPREFLRGNEPCIKYTGHYFITTLLYSFFLGCFGVDRFCLGHTGTAVGKLLTLGGLGIWWFVDLILLITGGLTPSDSSNWCTFY</sequence>
<name>TM2D2_DANRE</name>